<comment type="function">
    <text evidence="1">Catalyzes the hydrolysis of glutamine to glutamate and ammonia as part of the biosynthesis of pyridoxal 5'-phosphate. The resulting ammonia molecule is channeled to the active site of PdxS.</text>
</comment>
<comment type="catalytic activity">
    <reaction evidence="1">
        <text>aldehydo-D-ribose 5-phosphate + D-glyceraldehyde 3-phosphate + L-glutamine = pyridoxal 5'-phosphate + L-glutamate + phosphate + 3 H2O + H(+)</text>
        <dbReference type="Rhea" id="RHEA:31507"/>
        <dbReference type="ChEBI" id="CHEBI:15377"/>
        <dbReference type="ChEBI" id="CHEBI:15378"/>
        <dbReference type="ChEBI" id="CHEBI:29985"/>
        <dbReference type="ChEBI" id="CHEBI:43474"/>
        <dbReference type="ChEBI" id="CHEBI:58273"/>
        <dbReference type="ChEBI" id="CHEBI:58359"/>
        <dbReference type="ChEBI" id="CHEBI:59776"/>
        <dbReference type="ChEBI" id="CHEBI:597326"/>
        <dbReference type="EC" id="4.3.3.6"/>
    </reaction>
</comment>
<comment type="catalytic activity">
    <reaction evidence="1">
        <text>L-glutamine + H2O = L-glutamate + NH4(+)</text>
        <dbReference type="Rhea" id="RHEA:15889"/>
        <dbReference type="ChEBI" id="CHEBI:15377"/>
        <dbReference type="ChEBI" id="CHEBI:28938"/>
        <dbReference type="ChEBI" id="CHEBI:29985"/>
        <dbReference type="ChEBI" id="CHEBI:58359"/>
        <dbReference type="EC" id="3.5.1.2"/>
    </reaction>
</comment>
<comment type="pathway">
    <text evidence="1">Cofactor biosynthesis; pyridoxal 5'-phosphate biosynthesis.</text>
</comment>
<comment type="subunit">
    <text evidence="1">In the presence of PdxS, forms a dodecamer of heterodimers. Only shows activity in the heterodimer.</text>
</comment>
<comment type="similarity">
    <text evidence="1">Belongs to the glutaminase PdxT/SNO family.</text>
</comment>
<keyword id="KW-0315">Glutamine amidotransferase</keyword>
<keyword id="KW-0378">Hydrolase</keyword>
<keyword id="KW-0456">Lyase</keyword>
<keyword id="KW-0663">Pyridoxal phosphate</keyword>
<keyword id="KW-1185">Reference proteome</keyword>
<accession>Q04JN6</accession>
<sequence length="193" mass="21106">MKIGILALQGAFAEHAKVLDQLGVESVELRNLDDFQQDQSDLSGLILPGGESTTMGKLLRDQNMLLPIREAILSGLPVFGTCAGLILLAKEITSQKESHLGTMDMVVERNAYGRQLGSFYTEAECKGVGKIPMTFIRGPIISSVGEGVEILAIVNNQIVAAQEKNMLVSSFHPELTDDVRLHQYFINMCKEKS</sequence>
<proteinExistence type="inferred from homology"/>
<dbReference type="EC" id="4.3.3.6" evidence="1"/>
<dbReference type="EC" id="3.5.1.2" evidence="1"/>
<dbReference type="EMBL" id="CP000410">
    <property type="protein sequence ID" value="ABJ55188.1"/>
    <property type="molecule type" value="Genomic_DNA"/>
</dbReference>
<dbReference type="RefSeq" id="WP_000689943.1">
    <property type="nucleotide sequence ID" value="NZ_JAMLJR010000005.1"/>
</dbReference>
<dbReference type="SMR" id="Q04JN6"/>
<dbReference type="PaxDb" id="373153-SPD_1296"/>
<dbReference type="KEGG" id="spd:SPD_1296"/>
<dbReference type="eggNOG" id="COG0311">
    <property type="taxonomic scope" value="Bacteria"/>
</dbReference>
<dbReference type="HOGENOM" id="CLU_069674_2_0_9"/>
<dbReference type="BioCyc" id="SPNE373153:G1G6V-1399-MONOMER"/>
<dbReference type="UniPathway" id="UPA00245"/>
<dbReference type="Proteomes" id="UP000001452">
    <property type="component" value="Chromosome"/>
</dbReference>
<dbReference type="GO" id="GO:0005829">
    <property type="term" value="C:cytosol"/>
    <property type="evidence" value="ECO:0007669"/>
    <property type="project" value="TreeGrafter"/>
</dbReference>
<dbReference type="GO" id="GO:1903600">
    <property type="term" value="C:glutaminase complex"/>
    <property type="evidence" value="ECO:0007669"/>
    <property type="project" value="TreeGrafter"/>
</dbReference>
<dbReference type="GO" id="GO:0004359">
    <property type="term" value="F:glutaminase activity"/>
    <property type="evidence" value="ECO:0007669"/>
    <property type="project" value="UniProtKB-UniRule"/>
</dbReference>
<dbReference type="GO" id="GO:0036381">
    <property type="term" value="F:pyridoxal 5'-phosphate synthase (glutamine hydrolysing) activity"/>
    <property type="evidence" value="ECO:0007669"/>
    <property type="project" value="UniProtKB-UniRule"/>
</dbReference>
<dbReference type="GO" id="GO:0006543">
    <property type="term" value="P:glutamine catabolic process"/>
    <property type="evidence" value="ECO:0007669"/>
    <property type="project" value="UniProtKB-UniRule"/>
</dbReference>
<dbReference type="GO" id="GO:0042823">
    <property type="term" value="P:pyridoxal phosphate biosynthetic process"/>
    <property type="evidence" value="ECO:0007669"/>
    <property type="project" value="UniProtKB-UniRule"/>
</dbReference>
<dbReference type="GO" id="GO:0008614">
    <property type="term" value="P:pyridoxine metabolic process"/>
    <property type="evidence" value="ECO:0007669"/>
    <property type="project" value="TreeGrafter"/>
</dbReference>
<dbReference type="CDD" id="cd01749">
    <property type="entry name" value="GATase1_PB"/>
    <property type="match status" value="1"/>
</dbReference>
<dbReference type="FunFam" id="3.40.50.880:FF:000010">
    <property type="entry name" value="uncharacterized protein LOC100176842 isoform X2"/>
    <property type="match status" value="1"/>
</dbReference>
<dbReference type="Gene3D" id="3.40.50.880">
    <property type="match status" value="1"/>
</dbReference>
<dbReference type="HAMAP" id="MF_01615">
    <property type="entry name" value="PdxT"/>
    <property type="match status" value="1"/>
</dbReference>
<dbReference type="InterPro" id="IPR029062">
    <property type="entry name" value="Class_I_gatase-like"/>
</dbReference>
<dbReference type="InterPro" id="IPR002161">
    <property type="entry name" value="PdxT/SNO"/>
</dbReference>
<dbReference type="InterPro" id="IPR021196">
    <property type="entry name" value="PdxT/SNO_CS"/>
</dbReference>
<dbReference type="NCBIfam" id="TIGR03800">
    <property type="entry name" value="PLP_synth_Pdx2"/>
    <property type="match status" value="1"/>
</dbReference>
<dbReference type="PANTHER" id="PTHR31559">
    <property type="entry name" value="PYRIDOXAL 5'-PHOSPHATE SYNTHASE SUBUNIT SNO"/>
    <property type="match status" value="1"/>
</dbReference>
<dbReference type="PANTHER" id="PTHR31559:SF0">
    <property type="entry name" value="PYRIDOXAL 5'-PHOSPHATE SYNTHASE SUBUNIT SNO1-RELATED"/>
    <property type="match status" value="1"/>
</dbReference>
<dbReference type="Pfam" id="PF01174">
    <property type="entry name" value="SNO"/>
    <property type="match status" value="1"/>
</dbReference>
<dbReference type="PIRSF" id="PIRSF005639">
    <property type="entry name" value="Glut_amidoT_SNO"/>
    <property type="match status" value="1"/>
</dbReference>
<dbReference type="SUPFAM" id="SSF52317">
    <property type="entry name" value="Class I glutamine amidotransferase-like"/>
    <property type="match status" value="1"/>
</dbReference>
<dbReference type="PROSITE" id="PS01236">
    <property type="entry name" value="PDXT_SNO_1"/>
    <property type="match status" value="1"/>
</dbReference>
<dbReference type="PROSITE" id="PS51130">
    <property type="entry name" value="PDXT_SNO_2"/>
    <property type="match status" value="1"/>
</dbReference>
<reference key="1">
    <citation type="journal article" date="2007" name="J. Bacteriol.">
        <title>Genome sequence of Avery's virulent serotype 2 strain D39 of Streptococcus pneumoniae and comparison with that of unencapsulated laboratory strain R6.</title>
        <authorList>
            <person name="Lanie J.A."/>
            <person name="Ng W.-L."/>
            <person name="Kazmierczak K.M."/>
            <person name="Andrzejewski T.M."/>
            <person name="Davidsen T.M."/>
            <person name="Wayne K.J."/>
            <person name="Tettelin H."/>
            <person name="Glass J.I."/>
            <person name="Winkler M.E."/>
        </authorList>
    </citation>
    <scope>NUCLEOTIDE SEQUENCE [LARGE SCALE GENOMIC DNA]</scope>
    <source>
        <strain>D39 / NCTC 7466</strain>
    </source>
</reference>
<name>PDXT_STRP2</name>
<gene>
    <name evidence="1" type="primary">pdxT</name>
    <name type="ordered locus">SPD_1296</name>
</gene>
<organism>
    <name type="scientific">Streptococcus pneumoniae serotype 2 (strain D39 / NCTC 7466)</name>
    <dbReference type="NCBI Taxonomy" id="373153"/>
    <lineage>
        <taxon>Bacteria</taxon>
        <taxon>Bacillati</taxon>
        <taxon>Bacillota</taxon>
        <taxon>Bacilli</taxon>
        <taxon>Lactobacillales</taxon>
        <taxon>Streptococcaceae</taxon>
        <taxon>Streptococcus</taxon>
    </lineage>
</organism>
<feature type="chain" id="PRO_0000293014" description="Pyridoxal 5'-phosphate synthase subunit PdxT">
    <location>
        <begin position="1"/>
        <end position="193"/>
    </location>
</feature>
<feature type="active site" description="Nucleophile" evidence="1">
    <location>
        <position position="82"/>
    </location>
</feature>
<feature type="active site" description="Charge relay system" evidence="1">
    <location>
        <position position="172"/>
    </location>
</feature>
<feature type="active site" description="Charge relay system" evidence="1">
    <location>
        <position position="174"/>
    </location>
</feature>
<feature type="binding site" evidence="1">
    <location>
        <begin position="50"/>
        <end position="52"/>
    </location>
    <ligand>
        <name>L-glutamine</name>
        <dbReference type="ChEBI" id="CHEBI:58359"/>
    </ligand>
</feature>
<feature type="binding site" evidence="1">
    <location>
        <position position="109"/>
    </location>
    <ligand>
        <name>L-glutamine</name>
        <dbReference type="ChEBI" id="CHEBI:58359"/>
    </ligand>
</feature>
<feature type="binding site" evidence="1">
    <location>
        <begin position="136"/>
        <end position="137"/>
    </location>
    <ligand>
        <name>L-glutamine</name>
        <dbReference type="ChEBI" id="CHEBI:58359"/>
    </ligand>
</feature>
<evidence type="ECO:0000255" key="1">
    <source>
        <dbReference type="HAMAP-Rule" id="MF_01615"/>
    </source>
</evidence>
<protein>
    <recommendedName>
        <fullName evidence="1">Pyridoxal 5'-phosphate synthase subunit PdxT</fullName>
        <ecNumber evidence="1">4.3.3.6</ecNumber>
    </recommendedName>
    <alternativeName>
        <fullName evidence="1">Pdx2</fullName>
    </alternativeName>
    <alternativeName>
        <fullName evidence="1">Pyridoxal 5'-phosphate synthase glutaminase subunit</fullName>
        <ecNumber evidence="1">3.5.1.2</ecNumber>
    </alternativeName>
</protein>